<dbReference type="EMBL" id="FO080160">
    <property type="protein sequence ID" value="CCD61700.1"/>
    <property type="molecule type" value="Genomic_DNA"/>
</dbReference>
<dbReference type="PIR" id="T15317">
    <property type="entry name" value="T15317"/>
</dbReference>
<dbReference type="RefSeq" id="NP_510785.2">
    <property type="nucleotide sequence ID" value="NM_078384.5"/>
</dbReference>
<dbReference type="BioGRID" id="46780">
    <property type="interactions" value="1"/>
</dbReference>
<dbReference type="FunCoup" id="Q10928">
    <property type="interactions" value="243"/>
</dbReference>
<dbReference type="EnsemblMetazoa" id="B0302.5.1">
    <property type="protein sequence ID" value="B0302.5.1"/>
    <property type="gene ID" value="WBGene00015122"/>
</dbReference>
<dbReference type="GeneID" id="181914"/>
<dbReference type="KEGG" id="cel:CELE_B0302.5"/>
<dbReference type="UCSC" id="B0302.5">
    <property type="organism name" value="c. elegans"/>
</dbReference>
<dbReference type="AGR" id="WB:WBGene00015122"/>
<dbReference type="CTD" id="181914"/>
<dbReference type="WormBase" id="B0302.5">
    <property type="protein sequence ID" value="CE39551"/>
    <property type="gene ID" value="WBGene00015122"/>
</dbReference>
<dbReference type="HOGENOM" id="CLU_1645268_0_0_1"/>
<dbReference type="InParanoid" id="Q10928"/>
<dbReference type="OrthoDB" id="5831187at2759"/>
<dbReference type="PRO" id="PR:Q10928"/>
<dbReference type="Proteomes" id="UP000001940">
    <property type="component" value="Chromosome X"/>
</dbReference>
<dbReference type="Bgee" id="WBGene00015122">
    <property type="expression patterns" value="Expressed in pharyngeal muscle cell (C elegans) and 3 other cell types or tissues"/>
</dbReference>
<proteinExistence type="predicted"/>
<protein>
    <recommendedName>
        <fullName>Uncharacterized protein B0302.5</fullName>
    </recommendedName>
</protein>
<keyword id="KW-1185">Reference proteome</keyword>
<feature type="chain" id="PRO_0000065062" description="Uncharacterized protein B0302.5">
    <location>
        <begin position="1"/>
        <end position="165"/>
    </location>
</feature>
<feature type="region of interest" description="Disordered" evidence="1">
    <location>
        <begin position="49"/>
        <end position="165"/>
    </location>
</feature>
<feature type="compositionally biased region" description="Polar residues" evidence="1">
    <location>
        <begin position="94"/>
        <end position="106"/>
    </location>
</feature>
<feature type="compositionally biased region" description="Low complexity" evidence="1">
    <location>
        <begin position="120"/>
        <end position="135"/>
    </location>
</feature>
<feature type="compositionally biased region" description="Polar residues" evidence="1">
    <location>
        <begin position="139"/>
        <end position="157"/>
    </location>
</feature>
<sequence length="165" mass="18875">MTAIRDNLCELKRLEIPRPKCQGMQFVATRGRQGFYRTIRENGAMYGIQLKPQGPKRPQLSSDLFNRPMTVPEENSEDVEEAQTSQPETRKVEMNNNNNYKISYTSRPPLPPQQPKQTYTLQRTTPQAQPTPQQPRMFSRSSGGITGAVNNRPQMVAQQREIAQK</sequence>
<evidence type="ECO:0000256" key="1">
    <source>
        <dbReference type="SAM" id="MobiDB-lite"/>
    </source>
</evidence>
<reference key="1">
    <citation type="journal article" date="1998" name="Science">
        <title>Genome sequence of the nematode C. elegans: a platform for investigating biology.</title>
        <authorList>
            <consortium name="The C. elegans sequencing consortium"/>
        </authorList>
    </citation>
    <scope>NUCLEOTIDE SEQUENCE [LARGE SCALE GENOMIC DNA]</scope>
    <source>
        <strain>Bristol N2</strain>
    </source>
</reference>
<name>YWR5_CAEEL</name>
<accession>Q10928</accession>
<organism>
    <name type="scientific">Caenorhabditis elegans</name>
    <dbReference type="NCBI Taxonomy" id="6239"/>
    <lineage>
        <taxon>Eukaryota</taxon>
        <taxon>Metazoa</taxon>
        <taxon>Ecdysozoa</taxon>
        <taxon>Nematoda</taxon>
        <taxon>Chromadorea</taxon>
        <taxon>Rhabditida</taxon>
        <taxon>Rhabditina</taxon>
        <taxon>Rhabditomorpha</taxon>
        <taxon>Rhabditoidea</taxon>
        <taxon>Rhabditidae</taxon>
        <taxon>Peloderinae</taxon>
        <taxon>Caenorhabditis</taxon>
    </lineage>
</organism>
<gene>
    <name type="ORF">B0302.5</name>
</gene>